<name>BPT_RHORT</name>
<dbReference type="EC" id="2.3.2.29" evidence="1"/>
<dbReference type="EMBL" id="CP000230">
    <property type="protein sequence ID" value="ABC22645.1"/>
    <property type="molecule type" value="Genomic_DNA"/>
</dbReference>
<dbReference type="RefSeq" id="WP_011389598.1">
    <property type="nucleotide sequence ID" value="NC_007643.1"/>
</dbReference>
<dbReference type="RefSeq" id="YP_426932.1">
    <property type="nucleotide sequence ID" value="NC_007643.1"/>
</dbReference>
<dbReference type="SMR" id="Q2RTA0"/>
<dbReference type="STRING" id="269796.Rru_A1845"/>
<dbReference type="EnsemblBacteria" id="ABC22645">
    <property type="protein sequence ID" value="ABC22645"/>
    <property type="gene ID" value="Rru_A1845"/>
</dbReference>
<dbReference type="KEGG" id="rru:Rru_A1845"/>
<dbReference type="PATRIC" id="fig|269796.9.peg.1924"/>
<dbReference type="eggNOG" id="COG2935">
    <property type="taxonomic scope" value="Bacteria"/>
</dbReference>
<dbReference type="HOGENOM" id="CLU_077607_1_0_5"/>
<dbReference type="PhylomeDB" id="Q2RTA0"/>
<dbReference type="Proteomes" id="UP000001929">
    <property type="component" value="Chromosome"/>
</dbReference>
<dbReference type="GO" id="GO:0005737">
    <property type="term" value="C:cytoplasm"/>
    <property type="evidence" value="ECO:0007669"/>
    <property type="project" value="UniProtKB-SubCell"/>
</dbReference>
<dbReference type="GO" id="GO:0004057">
    <property type="term" value="F:arginyl-tRNA--protein transferase activity"/>
    <property type="evidence" value="ECO:0007669"/>
    <property type="project" value="InterPro"/>
</dbReference>
<dbReference type="GO" id="GO:0008914">
    <property type="term" value="F:leucyl-tRNA--protein transferase activity"/>
    <property type="evidence" value="ECO:0007669"/>
    <property type="project" value="UniProtKB-UniRule"/>
</dbReference>
<dbReference type="GO" id="GO:0071596">
    <property type="term" value="P:ubiquitin-dependent protein catabolic process via the N-end rule pathway"/>
    <property type="evidence" value="ECO:0007669"/>
    <property type="project" value="InterPro"/>
</dbReference>
<dbReference type="HAMAP" id="MF_00689">
    <property type="entry name" value="Bpt"/>
    <property type="match status" value="1"/>
</dbReference>
<dbReference type="InterPro" id="IPR016181">
    <property type="entry name" value="Acyl_CoA_acyltransferase"/>
</dbReference>
<dbReference type="InterPro" id="IPR017138">
    <property type="entry name" value="Asp_Glu_LeuTrfase"/>
</dbReference>
<dbReference type="InterPro" id="IPR030700">
    <property type="entry name" value="N-end_Aminoacyl_Trfase"/>
</dbReference>
<dbReference type="InterPro" id="IPR007472">
    <property type="entry name" value="N-end_Aminoacyl_Trfase_C"/>
</dbReference>
<dbReference type="InterPro" id="IPR007471">
    <property type="entry name" value="N-end_Aminoacyl_Trfase_N"/>
</dbReference>
<dbReference type="NCBIfam" id="NF002343">
    <property type="entry name" value="PRK01305.1-4"/>
    <property type="match status" value="1"/>
</dbReference>
<dbReference type="PANTHER" id="PTHR21367">
    <property type="entry name" value="ARGININE-TRNA-PROTEIN TRANSFERASE 1"/>
    <property type="match status" value="1"/>
</dbReference>
<dbReference type="PANTHER" id="PTHR21367:SF1">
    <property type="entry name" value="ARGINYL-TRNA--PROTEIN TRANSFERASE 1"/>
    <property type="match status" value="1"/>
</dbReference>
<dbReference type="Pfam" id="PF04377">
    <property type="entry name" value="ATE_C"/>
    <property type="match status" value="1"/>
</dbReference>
<dbReference type="Pfam" id="PF04376">
    <property type="entry name" value="ATE_N"/>
    <property type="match status" value="1"/>
</dbReference>
<dbReference type="PIRSF" id="PIRSF037208">
    <property type="entry name" value="ATE_pro_prd"/>
    <property type="match status" value="1"/>
</dbReference>
<dbReference type="SUPFAM" id="SSF55729">
    <property type="entry name" value="Acyl-CoA N-acyltransferases (Nat)"/>
    <property type="match status" value="1"/>
</dbReference>
<protein>
    <recommendedName>
        <fullName evidence="1">Aspartate/glutamate leucyltransferase</fullName>
        <ecNumber evidence="1">2.3.2.29</ecNumber>
    </recommendedName>
</protein>
<keyword id="KW-0012">Acyltransferase</keyword>
<keyword id="KW-0963">Cytoplasm</keyword>
<keyword id="KW-1185">Reference proteome</keyword>
<keyword id="KW-0808">Transferase</keyword>
<feature type="chain" id="PRO_1000131996" description="Aspartate/glutamate leucyltransferase">
    <location>
        <begin position="1"/>
        <end position="246"/>
    </location>
</feature>
<reference key="1">
    <citation type="journal article" date="2011" name="Stand. Genomic Sci.">
        <title>Complete genome sequence of Rhodospirillum rubrum type strain (S1).</title>
        <authorList>
            <person name="Munk A.C."/>
            <person name="Copeland A."/>
            <person name="Lucas S."/>
            <person name="Lapidus A."/>
            <person name="Del Rio T.G."/>
            <person name="Barry K."/>
            <person name="Detter J.C."/>
            <person name="Hammon N."/>
            <person name="Israni S."/>
            <person name="Pitluck S."/>
            <person name="Brettin T."/>
            <person name="Bruce D."/>
            <person name="Han C."/>
            <person name="Tapia R."/>
            <person name="Gilna P."/>
            <person name="Schmutz J."/>
            <person name="Larimer F."/>
            <person name="Land M."/>
            <person name="Kyrpides N.C."/>
            <person name="Mavromatis K."/>
            <person name="Richardson P."/>
            <person name="Rohde M."/>
            <person name="Goeker M."/>
            <person name="Klenk H.P."/>
            <person name="Zhang Y."/>
            <person name="Roberts G.P."/>
            <person name="Reslewic S."/>
            <person name="Schwartz D.C."/>
        </authorList>
    </citation>
    <scope>NUCLEOTIDE SEQUENCE [LARGE SCALE GENOMIC DNA]</scope>
    <source>
        <strain>ATCC 11170 / ATH 1.1.1 / DSM 467 / LMG 4362 / NCIMB 8255 / S1</strain>
    </source>
</reference>
<comment type="function">
    <text evidence="1">Functions in the N-end rule pathway of protein degradation where it conjugates Leu from its aminoacyl-tRNA to the N-termini of proteins containing an N-terminal aspartate or glutamate.</text>
</comment>
<comment type="catalytic activity">
    <reaction evidence="1">
        <text>N-terminal L-glutamyl-[protein] + L-leucyl-tRNA(Leu) = N-terminal L-leucyl-L-glutamyl-[protein] + tRNA(Leu) + H(+)</text>
        <dbReference type="Rhea" id="RHEA:50412"/>
        <dbReference type="Rhea" id="RHEA-COMP:9613"/>
        <dbReference type="Rhea" id="RHEA-COMP:9622"/>
        <dbReference type="Rhea" id="RHEA-COMP:12664"/>
        <dbReference type="Rhea" id="RHEA-COMP:12668"/>
        <dbReference type="ChEBI" id="CHEBI:15378"/>
        <dbReference type="ChEBI" id="CHEBI:64721"/>
        <dbReference type="ChEBI" id="CHEBI:78442"/>
        <dbReference type="ChEBI" id="CHEBI:78494"/>
        <dbReference type="ChEBI" id="CHEBI:133041"/>
        <dbReference type="EC" id="2.3.2.29"/>
    </reaction>
</comment>
<comment type="catalytic activity">
    <reaction evidence="1">
        <text>N-terminal L-aspartyl-[protein] + L-leucyl-tRNA(Leu) = N-terminal L-leucyl-L-aspartyl-[protein] + tRNA(Leu) + H(+)</text>
        <dbReference type="Rhea" id="RHEA:50420"/>
        <dbReference type="Rhea" id="RHEA-COMP:9613"/>
        <dbReference type="Rhea" id="RHEA-COMP:9622"/>
        <dbReference type="Rhea" id="RHEA-COMP:12669"/>
        <dbReference type="Rhea" id="RHEA-COMP:12674"/>
        <dbReference type="ChEBI" id="CHEBI:15378"/>
        <dbReference type="ChEBI" id="CHEBI:64720"/>
        <dbReference type="ChEBI" id="CHEBI:78442"/>
        <dbReference type="ChEBI" id="CHEBI:78494"/>
        <dbReference type="ChEBI" id="CHEBI:133042"/>
        <dbReference type="EC" id="2.3.2.29"/>
    </reaction>
</comment>
<comment type="subcellular location">
    <subcellularLocation>
        <location evidence="1">Cytoplasm</location>
    </subcellularLocation>
</comment>
<comment type="similarity">
    <text evidence="1">Belongs to the R-transferase family. Bpt subfamily.</text>
</comment>
<gene>
    <name evidence="1" type="primary">bpt</name>
    <name type="ordered locus">Rru_A1845</name>
</gene>
<evidence type="ECO:0000255" key="1">
    <source>
        <dbReference type="HAMAP-Rule" id="MF_00689"/>
    </source>
</evidence>
<sequence length="246" mass="27954">MDQGPINRPHFFFTTAPMPCPYLEGHLERKMVTDLTGPEAERLHESLSRAGFRRSHTIAYAPVCPGCTACVPVRIRARAFVKNKSFRRIVRANAGVTAEYVPARATVEQFHLFSQYQQARHGESDMALMGFFDYRSMVEDSPISTSIAEFREAGGELVAACLIDHLSDGLSAVYSFFNTTLPQSRGLGTWMILWMVDETVRRDLDHVYLGYWIAESSKMAYKERFQPLEVFGRRGWIAFDERGRPG</sequence>
<accession>Q2RTA0</accession>
<proteinExistence type="inferred from homology"/>
<organism>
    <name type="scientific">Rhodospirillum rubrum (strain ATCC 11170 / ATH 1.1.1 / DSM 467 / LMG 4362 / NCIMB 8255 / S1)</name>
    <dbReference type="NCBI Taxonomy" id="269796"/>
    <lineage>
        <taxon>Bacteria</taxon>
        <taxon>Pseudomonadati</taxon>
        <taxon>Pseudomonadota</taxon>
        <taxon>Alphaproteobacteria</taxon>
        <taxon>Rhodospirillales</taxon>
        <taxon>Rhodospirillaceae</taxon>
        <taxon>Rhodospirillum</taxon>
    </lineage>
</organism>